<proteinExistence type="evidence at protein level"/>
<sequence>MKVLIIFACLVVMASAVCNRLEQILVKTQWAQSYGEAENRAAFSRDLFSELFNIQGSSRALFSGVGVDDMNSAAFTAHCLRVTGALNRLISQLDQQATINADLAHLAGQHASRNLDASNFAAMGQAVMSVVPTHLDCFNQHAWGECYERIASGISG</sequence>
<protein>
    <recommendedName>
        <fullName>Extracellular giant hemoglobin major globin subunit A1</fullName>
        <shortName>Major globin chain b</shortName>
    </recommendedName>
</protein>
<gene>
    <name type="primary">ghbA1</name>
</gene>
<comment type="function">
    <text>The extracellular giant hemoglobin is able to bind and transport oxygen and hydrosulfide simultaneously and reversibly at two different sites.</text>
</comment>
<comment type="subunit">
    <text evidence="3">The 400 kDa hemoglobin consists of a spherical 24-mer arranged as a double layer of dome-shaped dodecamers. Each dodecamer is composed of the 3-fold trimer of the tetramer A1-A2-B1-B2 having one intra-tetramer (A1-B2) disulfide bond and one inter-tetramer (B1-B2) disulfide bond per tetramer.</text>
</comment>
<comment type="subcellular location">
    <subcellularLocation>
        <location>Secreted</location>
    </subcellularLocation>
</comment>
<comment type="similarity">
    <text evidence="1">Belongs to the globin family.</text>
</comment>
<reference key="1">
    <citation type="journal article" date="2005" name="Zool. Sci.">
        <title>Purification, characterization and sequence analyses of the extracellular giant hemoglobin from Oligobrachia mashikoi.</title>
        <authorList>
            <person name="Nakagawa T."/>
            <person name="Onoda S."/>
            <person name="Kanemori M."/>
            <person name="Sasayama Y."/>
            <person name="Fukumori Y."/>
        </authorList>
    </citation>
    <scope>NUCLEOTIDE SEQUENCE [MRNA]</scope>
    <scope>PROTEIN SEQUENCE OF 17-26</scope>
</reference>
<reference key="2">
    <citation type="journal article" date="1996" name="Biochim. Biophys. Acta">
        <title>Electrospray ionization mass spectrometric composition of the 400 kDa hemoglobin from the pogonophoran Oligobrachia mashikoi and the primary structures of three major globin chains.</title>
        <authorList>
            <person name="Yuasa H.J."/>
            <person name="Green B.N."/>
            <person name="Takagi T."/>
            <person name="Suzuki N."/>
            <person name="Vinogradov S.N."/>
            <person name="Suzuki T."/>
        </authorList>
    </citation>
    <scope>NUCLEOTIDE SEQUENCE [MRNA] OF 25-156</scope>
    <scope>PROTEIN SEQUENCE OF 17-48</scope>
    <scope>IDENTIFICATION BY MASS SPECTROMETRY</scope>
</reference>
<reference key="3">
    <citation type="journal article" date="2005" name="Proc. Natl. Acad. Sci. U.S.A.">
        <title>Structure of an extracellular giant hemoglobin of the gutless beard worm Oligobrachia mashikoi.</title>
        <authorList>
            <person name="Numoto N."/>
            <person name="Nakagawa T."/>
            <person name="Kita A."/>
            <person name="Sasayama Y."/>
            <person name="Fukumori Y."/>
            <person name="Miki K."/>
        </authorList>
    </citation>
    <scope>X-RAY CRYSTALLOGRAPHY (2.85 ANGSTROMS) OF 17-156</scope>
    <scope>SUBUNIT</scope>
    <scope>METAL</scope>
    <scope>DISULFIDE BONDS</scope>
</reference>
<feature type="signal peptide" evidence="2 4">
    <location>
        <begin position="1"/>
        <end position="16"/>
    </location>
</feature>
<feature type="chain" id="PRO_0000052518" description="Extracellular giant hemoglobin major globin subunit A1">
    <location>
        <begin position="17"/>
        <end position="156"/>
    </location>
</feature>
<feature type="domain" description="Globin" evidence="1">
    <location>
        <begin position="17"/>
        <end position="156"/>
    </location>
</feature>
<feature type="binding site" evidence="5">
    <location>
        <position position="79"/>
    </location>
    <ligand>
        <name>hydrogen sulfide</name>
        <dbReference type="ChEBI" id="CHEBI:29919"/>
    </ligand>
</feature>
<feature type="binding site" description="proximal binding residue">
    <location>
        <position position="110"/>
    </location>
    <ligand>
        <name>heme b</name>
        <dbReference type="ChEBI" id="CHEBI:60344"/>
    </ligand>
    <ligandPart>
        <name>Fe</name>
        <dbReference type="ChEBI" id="CHEBI:18248"/>
    </ligandPart>
</feature>
<feature type="disulfide bond" evidence="3">
    <location>
        <begin position="18"/>
        <end position="146"/>
    </location>
</feature>
<feature type="disulfide bond" description="Interchain (with C-142 in subunit B2)" evidence="3">
    <location>
        <position position="137"/>
    </location>
</feature>
<feature type="helix" evidence="7">
    <location>
        <begin position="20"/>
        <end position="34"/>
    </location>
</feature>
<feature type="helix" evidence="7">
    <location>
        <begin position="38"/>
        <end position="54"/>
    </location>
</feature>
<feature type="helix" evidence="7">
    <location>
        <begin position="56"/>
        <end position="65"/>
    </location>
</feature>
<feature type="turn" evidence="7">
    <location>
        <begin position="66"/>
        <end position="68"/>
    </location>
</feature>
<feature type="helix" evidence="7">
    <location>
        <begin position="73"/>
        <end position="91"/>
    </location>
</feature>
<feature type="turn" evidence="7">
    <location>
        <begin position="92"/>
        <end position="94"/>
    </location>
</feature>
<feature type="helix" evidence="7">
    <location>
        <begin position="96"/>
        <end position="110"/>
    </location>
</feature>
<feature type="helix" evidence="6">
    <location>
        <begin position="111"/>
        <end position="113"/>
    </location>
</feature>
<feature type="helix" evidence="7">
    <location>
        <begin position="117"/>
        <end position="130"/>
    </location>
</feature>
<feature type="helix" evidence="7">
    <location>
        <begin position="131"/>
        <end position="134"/>
    </location>
</feature>
<feature type="helix" evidence="7">
    <location>
        <begin position="140"/>
        <end position="154"/>
    </location>
</feature>
<dbReference type="EMBL" id="AB185392">
    <property type="protein sequence ID" value="BAD86543.1"/>
    <property type="molecule type" value="mRNA"/>
</dbReference>
<dbReference type="PIR" id="S72252">
    <property type="entry name" value="S72252"/>
</dbReference>
<dbReference type="PDB" id="2D2M">
    <property type="method" value="X-ray"/>
    <property type="resolution" value="2.85 A"/>
    <property type="chains" value="A=17-156"/>
</dbReference>
<dbReference type="PDB" id="2D2N">
    <property type="method" value="X-ray"/>
    <property type="resolution" value="3.20 A"/>
    <property type="chains" value="A=17-156"/>
</dbReference>
<dbReference type="PDB" id="2ZFO">
    <property type="method" value="X-ray"/>
    <property type="resolution" value="1.95 A"/>
    <property type="chains" value="A=17-156"/>
</dbReference>
<dbReference type="PDB" id="2ZS0">
    <property type="method" value="X-ray"/>
    <property type="resolution" value="1.60 A"/>
    <property type="chains" value="A=17-156"/>
</dbReference>
<dbReference type="PDB" id="2ZS1">
    <property type="method" value="X-ray"/>
    <property type="resolution" value="1.70 A"/>
    <property type="chains" value="A=17-156"/>
</dbReference>
<dbReference type="PDB" id="7E96">
    <property type="method" value="X-ray"/>
    <property type="resolution" value="2.40 A"/>
    <property type="chains" value="A=17-156"/>
</dbReference>
<dbReference type="PDB" id="7E97">
    <property type="method" value="X-ray"/>
    <property type="resolution" value="2.70 A"/>
    <property type="chains" value="A=17-156"/>
</dbReference>
<dbReference type="PDB" id="7E98">
    <property type="method" value="X-ray"/>
    <property type="resolution" value="2.20 A"/>
    <property type="chains" value="A=17-156"/>
</dbReference>
<dbReference type="PDB" id="7E99">
    <property type="method" value="X-ray"/>
    <property type="resolution" value="2.10 A"/>
    <property type="chains" value="A=17-156"/>
</dbReference>
<dbReference type="PDBsum" id="2D2M"/>
<dbReference type="PDBsum" id="2D2N"/>
<dbReference type="PDBsum" id="2ZFO"/>
<dbReference type="PDBsum" id="2ZS0"/>
<dbReference type="PDBsum" id="2ZS1"/>
<dbReference type="PDBsum" id="7E96"/>
<dbReference type="PDBsum" id="7E97"/>
<dbReference type="PDBsum" id="7E98"/>
<dbReference type="PDBsum" id="7E99"/>
<dbReference type="SMR" id="Q7M419"/>
<dbReference type="EvolutionaryTrace" id="Q7M419"/>
<dbReference type="GO" id="GO:0005576">
    <property type="term" value="C:extracellular region"/>
    <property type="evidence" value="ECO:0007669"/>
    <property type="project" value="UniProtKB-SubCell"/>
</dbReference>
<dbReference type="GO" id="GO:0005833">
    <property type="term" value="C:hemoglobin complex"/>
    <property type="evidence" value="ECO:0007669"/>
    <property type="project" value="InterPro"/>
</dbReference>
<dbReference type="GO" id="GO:0020037">
    <property type="term" value="F:heme binding"/>
    <property type="evidence" value="ECO:0007669"/>
    <property type="project" value="InterPro"/>
</dbReference>
<dbReference type="GO" id="GO:0005506">
    <property type="term" value="F:iron ion binding"/>
    <property type="evidence" value="ECO:0007669"/>
    <property type="project" value="InterPro"/>
</dbReference>
<dbReference type="GO" id="GO:0019825">
    <property type="term" value="F:oxygen binding"/>
    <property type="evidence" value="ECO:0007669"/>
    <property type="project" value="InterPro"/>
</dbReference>
<dbReference type="GO" id="GO:0005344">
    <property type="term" value="F:oxygen carrier activity"/>
    <property type="evidence" value="ECO:0007669"/>
    <property type="project" value="UniProtKB-KW"/>
</dbReference>
<dbReference type="CDD" id="cd01040">
    <property type="entry name" value="Mb-like"/>
    <property type="match status" value="1"/>
</dbReference>
<dbReference type="Gene3D" id="1.10.490.10">
    <property type="entry name" value="Globins"/>
    <property type="match status" value="1"/>
</dbReference>
<dbReference type="InterPro" id="IPR000971">
    <property type="entry name" value="Globin"/>
</dbReference>
<dbReference type="InterPro" id="IPR009050">
    <property type="entry name" value="Globin-like_sf"/>
</dbReference>
<dbReference type="InterPro" id="IPR012292">
    <property type="entry name" value="Globin/Proto"/>
</dbReference>
<dbReference type="InterPro" id="IPR014610">
    <property type="entry name" value="Haemoglobin_extracell"/>
</dbReference>
<dbReference type="InterPro" id="IPR044399">
    <property type="entry name" value="Mb-like_M"/>
</dbReference>
<dbReference type="Pfam" id="PF00042">
    <property type="entry name" value="Globin"/>
    <property type="match status" value="1"/>
</dbReference>
<dbReference type="PIRSF" id="PIRSF036517">
    <property type="entry name" value="Ext_hemo"/>
    <property type="match status" value="1"/>
</dbReference>
<dbReference type="SUPFAM" id="SSF46458">
    <property type="entry name" value="Globin-like"/>
    <property type="match status" value="1"/>
</dbReference>
<dbReference type="PROSITE" id="PS01033">
    <property type="entry name" value="GLOBIN"/>
    <property type="match status" value="1"/>
</dbReference>
<name>GLBA1_OLIMA</name>
<accession>Q7M419</accession>
<accession>Q5KSB9</accession>
<evidence type="ECO:0000255" key="1">
    <source>
        <dbReference type="PROSITE-ProRule" id="PRU00238"/>
    </source>
</evidence>
<evidence type="ECO:0000269" key="2">
    <source>
    </source>
</evidence>
<evidence type="ECO:0000269" key="3">
    <source>
    </source>
</evidence>
<evidence type="ECO:0000269" key="4">
    <source>
    </source>
</evidence>
<evidence type="ECO:0000305" key="5"/>
<evidence type="ECO:0007829" key="6">
    <source>
        <dbReference type="PDB" id="7E96"/>
    </source>
</evidence>
<evidence type="ECO:0007829" key="7">
    <source>
        <dbReference type="PDB" id="7E99"/>
    </source>
</evidence>
<keyword id="KW-0002">3D-structure</keyword>
<keyword id="KW-0903">Direct protein sequencing</keyword>
<keyword id="KW-1015">Disulfide bond</keyword>
<keyword id="KW-0349">Heme</keyword>
<keyword id="KW-0408">Iron</keyword>
<keyword id="KW-0479">Metal-binding</keyword>
<keyword id="KW-0561">Oxygen transport</keyword>
<keyword id="KW-0964">Secreted</keyword>
<keyword id="KW-0732">Signal</keyword>
<keyword id="KW-0813">Transport</keyword>
<organism>
    <name type="scientific">Oligobrachia mashikoi</name>
    <name type="common">Beard worm</name>
    <dbReference type="NCBI Taxonomy" id="55676"/>
    <lineage>
        <taxon>Eukaryota</taxon>
        <taxon>Metazoa</taxon>
        <taxon>Spiralia</taxon>
        <taxon>Lophotrochozoa</taxon>
        <taxon>Annelida</taxon>
        <taxon>Polychaeta</taxon>
        <taxon>Sedentaria</taxon>
        <taxon>Canalipalpata</taxon>
        <taxon>Sabellida</taxon>
        <taxon>Siboglinidae</taxon>
        <taxon>Oligobrachia</taxon>
    </lineage>
</organism>